<accession>B4HNS0</accession>
<sequence length="857" mass="95050">MSGRDNRGAGGGGGGHQPLSNAMGKLKEKLTRVGDELGYHRVESNLSTSNTATSLDTILPEDPFLFPQVSPQRHPQNIVRTQLLLEDEPPLSFRPLLEDDDINEPPTQQQQRTPLRASGSLELTPLPPPPTSLEIREHRDRQQRGAQGDDLQRSKQSLKGSRVSFERRDTGNSNTNSNKAAESSDEDSFEEKRTGFQQQKATSVDHKGILKDLKHILANDNRRQFQAKKHVSLDVKGTRFLQDLLKESSSEEEFHKTRREFQGRKHQSLDPRVTFKLDKVLQGSSTDSDEEGEDAEHKRLIHRPKDITKPVIIDLKDLESESDEDFLTSRQHFQQQRSISTDSRKSRRLYEMDEMGNKRGENIRHAVPFVRQITEDGKPKLEVYRPTTNPIYIWTQVLAALSVSLGSLVVGFVSAYTSPALVSMTDRNITSFEVTQDAGSWVGGIMPLAALAGGITGGPLIEYLGRRNTILATAVPFIVSSLLIACAVNVAMVLCGRFLAGFCVGIASLSLPVYLGETVQPEVRGTLGLLPTAFGNIGILLCFVAGSFMNWSMLAFLGAALPVPFLILMFLIPETPRWFVGRGLEERARKALKWLRGKEADVEPELKGLMRSQADADRQASRNTMLELLKLNNLKPLSISLGLMFFQQFSGINAVIFYTVQIFKDAGSTIDGNLCTIIVGIVNFLATFIGIVLIDRAGRKILLYVSDIAMVLTLFVLGGFFYCKANGPDVSHLGWLPLTCFVIYILGFSLGFGPIPWLMMGEILPAKIRGSAASVATAFNWFCTFVVTKTFQDLTVAMGAHGAFWLFGAICFVGLFFVIIYVPETQGKTLEDIERKMMGRVRRMSSVANIKPLSFNM</sequence>
<name>TRE11_DROSE</name>
<feature type="chain" id="PRO_0000395532" description="Facilitated trehalose transporter Tret1-1">
    <location>
        <begin position="1"/>
        <end position="857"/>
    </location>
</feature>
<feature type="topological domain" description="Cytoplasmic" evidence="2">
    <location>
        <begin position="1"/>
        <end position="392"/>
    </location>
</feature>
<feature type="transmembrane region" description="Helical; Name=1" evidence="2">
    <location>
        <begin position="393"/>
        <end position="413"/>
    </location>
</feature>
<feature type="topological domain" description="Extracellular" evidence="2">
    <location>
        <begin position="414"/>
        <end position="440"/>
    </location>
</feature>
<feature type="transmembrane region" description="Helical; Name=2" evidence="2">
    <location>
        <begin position="441"/>
        <end position="461"/>
    </location>
</feature>
<feature type="topological domain" description="Cytoplasmic" evidence="2">
    <location>
        <begin position="462"/>
        <end position="473"/>
    </location>
</feature>
<feature type="transmembrane region" description="Helical; Name=3" evidence="2">
    <location>
        <begin position="474"/>
        <end position="494"/>
    </location>
</feature>
<feature type="topological domain" description="Extracellular" evidence="2">
    <location>
        <begin position="495"/>
        <end position="497"/>
    </location>
</feature>
<feature type="transmembrane region" description="Helical; Name=4" evidence="2">
    <location>
        <begin position="498"/>
        <end position="518"/>
    </location>
</feature>
<feature type="topological domain" description="Cytoplasmic" evidence="2">
    <location>
        <begin position="519"/>
        <end position="528"/>
    </location>
</feature>
<feature type="transmembrane region" description="Helical; Name=5" evidence="2">
    <location>
        <begin position="529"/>
        <end position="549"/>
    </location>
</feature>
<feature type="topological domain" description="Extracellular" evidence="2">
    <location>
        <begin position="550"/>
        <end position="552"/>
    </location>
</feature>
<feature type="transmembrane region" description="Helical; Name=6" evidence="2">
    <location>
        <begin position="553"/>
        <end position="573"/>
    </location>
</feature>
<feature type="topological domain" description="Cytoplasmic" evidence="2">
    <location>
        <begin position="574"/>
        <end position="636"/>
    </location>
</feature>
<feature type="transmembrane region" description="Helical; Name=7" evidence="2">
    <location>
        <begin position="637"/>
        <end position="657"/>
    </location>
</feature>
<feature type="topological domain" description="Extracellular" evidence="2">
    <location>
        <begin position="658"/>
        <end position="673"/>
    </location>
</feature>
<feature type="transmembrane region" description="Helical; Name=8" evidence="2">
    <location>
        <begin position="674"/>
        <end position="694"/>
    </location>
</feature>
<feature type="topological domain" description="Cytoplasmic" evidence="2">
    <location>
        <begin position="695"/>
        <end position="700"/>
    </location>
</feature>
<feature type="transmembrane region" description="Helical; Name=9" evidence="2">
    <location>
        <begin position="701"/>
        <end position="721"/>
    </location>
</feature>
<feature type="topological domain" description="Extracellular" evidence="2">
    <location>
        <begin position="722"/>
        <end position="740"/>
    </location>
</feature>
<feature type="transmembrane region" description="Helical; Name=10" evidence="2">
    <location>
        <begin position="741"/>
        <end position="761"/>
    </location>
</feature>
<feature type="topological domain" description="Cytoplasmic" evidence="2">
    <location>
        <begin position="762"/>
        <end position="767"/>
    </location>
</feature>
<feature type="transmembrane region" description="Helical; Name=11" evidence="2">
    <location>
        <begin position="768"/>
        <end position="788"/>
    </location>
</feature>
<feature type="topological domain" description="Extracellular" evidence="2">
    <location>
        <begin position="789"/>
        <end position="801"/>
    </location>
</feature>
<feature type="transmembrane region" description="Helical; Name=12" evidence="2">
    <location>
        <begin position="802"/>
        <end position="822"/>
    </location>
</feature>
<feature type="topological domain" description="Cytoplasmic" evidence="2">
    <location>
        <begin position="823"/>
        <end position="857"/>
    </location>
</feature>
<feature type="region of interest" description="Disordered" evidence="3">
    <location>
        <begin position="1"/>
        <end position="27"/>
    </location>
</feature>
<feature type="region of interest" description="Disordered" evidence="3">
    <location>
        <begin position="92"/>
        <end position="203"/>
    </location>
</feature>
<feature type="region of interest" description="Disordered" evidence="3">
    <location>
        <begin position="327"/>
        <end position="346"/>
    </location>
</feature>
<feature type="compositionally biased region" description="Basic and acidic residues" evidence="3">
    <location>
        <begin position="134"/>
        <end position="143"/>
    </location>
</feature>
<feature type="compositionally biased region" description="Polar residues" evidence="3">
    <location>
        <begin position="171"/>
        <end position="181"/>
    </location>
</feature>
<feature type="compositionally biased region" description="Polar residues" evidence="3">
    <location>
        <begin position="330"/>
        <end position="341"/>
    </location>
</feature>
<feature type="modified residue" description="Phosphoserine" evidence="1">
    <location>
        <position position="248"/>
    </location>
</feature>
<feature type="modified residue" description="Phosphoserine" evidence="1">
    <location>
        <position position="249"/>
    </location>
</feature>
<feature type="modified residue" description="Phosphoserine" evidence="1">
    <location>
        <position position="250"/>
    </location>
</feature>
<feature type="modified residue" description="Phosphoserine" evidence="1">
    <location>
        <position position="320"/>
    </location>
</feature>
<feature type="modified residue" description="Phosphoserine" evidence="1">
    <location>
        <position position="322"/>
    </location>
</feature>
<feature type="modified residue" description="Phosphoserine" evidence="1">
    <location>
        <position position="845"/>
    </location>
</feature>
<feature type="modified residue" description="Phosphoserine" evidence="1">
    <location>
        <position position="846"/>
    </location>
</feature>
<feature type="glycosylation site" description="N-linked (GlcNAc...) asparagine" evidence="2">
    <location>
        <position position="428"/>
    </location>
</feature>
<feature type="glycosylation site" description="N-linked (GlcNAc...) asparagine" evidence="2">
    <location>
        <position position="550"/>
    </location>
</feature>
<evidence type="ECO:0000250" key="1">
    <source>
        <dbReference type="UniProtKB" id="A1Z8N1"/>
    </source>
</evidence>
<evidence type="ECO:0000255" key="2"/>
<evidence type="ECO:0000256" key="3">
    <source>
        <dbReference type="SAM" id="MobiDB-lite"/>
    </source>
</evidence>
<evidence type="ECO:0000312" key="4">
    <source>
        <dbReference type="EMBL" id="EDW47435.1"/>
    </source>
</evidence>
<proteinExistence type="inferred from homology"/>
<comment type="function">
    <text evidence="1">Low-capacity facilitative transporter for trehalose. Does not transport maltose, sucrose or lactose. Mediates the bidirectional transfer of trehalose. Responsible for the transport of trehalose synthesized in the fat body and the incorporation of trehalose into other tissues that require a carbon source, thereby regulating trehalose levels in the hemolymph (By similarity).</text>
</comment>
<comment type="subcellular location">
    <subcellularLocation>
        <location evidence="1">Cell membrane</location>
        <topology evidence="1">Multi-pass membrane protein</topology>
    </subcellularLocation>
</comment>
<comment type="similarity">
    <text evidence="1 2">Belongs to the major facilitator superfamily. Sugar transporter (TC 2.A.1.1) family. Trehalose transporter subfamily.</text>
</comment>
<reference evidence="4" key="1">
    <citation type="journal article" date="2007" name="Nature">
        <title>Evolution of genes and genomes on the Drosophila phylogeny.</title>
        <authorList>
            <consortium name="Drosophila 12 genomes consortium"/>
        </authorList>
    </citation>
    <scope>NUCLEOTIDE SEQUENCE [LARGE SCALE GENOMIC DNA]</scope>
    <source>
        <strain evidence="4">Rob3c / Tucson 14021-0248.25</strain>
    </source>
</reference>
<protein>
    <recommendedName>
        <fullName evidence="1">Facilitated trehalose transporter Tret1-1</fullName>
    </recommendedName>
</protein>
<organism>
    <name type="scientific">Drosophila sechellia</name>
    <name type="common">Fruit fly</name>
    <dbReference type="NCBI Taxonomy" id="7238"/>
    <lineage>
        <taxon>Eukaryota</taxon>
        <taxon>Metazoa</taxon>
        <taxon>Ecdysozoa</taxon>
        <taxon>Arthropoda</taxon>
        <taxon>Hexapoda</taxon>
        <taxon>Insecta</taxon>
        <taxon>Pterygota</taxon>
        <taxon>Neoptera</taxon>
        <taxon>Endopterygota</taxon>
        <taxon>Diptera</taxon>
        <taxon>Brachycera</taxon>
        <taxon>Muscomorpha</taxon>
        <taxon>Ephydroidea</taxon>
        <taxon>Drosophilidae</taxon>
        <taxon>Drosophila</taxon>
        <taxon>Sophophora</taxon>
    </lineage>
</organism>
<keyword id="KW-1003">Cell membrane</keyword>
<keyword id="KW-0325">Glycoprotein</keyword>
<keyword id="KW-0472">Membrane</keyword>
<keyword id="KW-0597">Phosphoprotein</keyword>
<keyword id="KW-1185">Reference proteome</keyword>
<keyword id="KW-0762">Sugar transport</keyword>
<keyword id="KW-0812">Transmembrane</keyword>
<keyword id="KW-1133">Transmembrane helix</keyword>
<keyword id="KW-0813">Transport</keyword>
<dbReference type="EMBL" id="CH480816">
    <property type="protein sequence ID" value="EDW47435.1"/>
    <property type="molecule type" value="Genomic_DNA"/>
</dbReference>
<dbReference type="SMR" id="B4HNS0"/>
<dbReference type="STRING" id="7238.B4HNS0"/>
<dbReference type="GlyCosmos" id="B4HNS0">
    <property type="glycosylation" value="2 sites, No reported glycans"/>
</dbReference>
<dbReference type="EnsemblMetazoa" id="FBtr0204283">
    <property type="protein sequence ID" value="FBpp0202775"/>
    <property type="gene ID" value="FBgn0176179"/>
</dbReference>
<dbReference type="EnsemblMetazoa" id="XM_002033386.2">
    <property type="protein sequence ID" value="XP_002033422.1"/>
    <property type="gene ID" value="LOC6608698"/>
</dbReference>
<dbReference type="GeneID" id="6608698"/>
<dbReference type="KEGG" id="dse:6608698"/>
<dbReference type="HOGENOM" id="CLU_016710_0_0_1"/>
<dbReference type="OMA" id="IFIWTQS"/>
<dbReference type="OrthoDB" id="47229at7215"/>
<dbReference type="PhylomeDB" id="B4HNS0"/>
<dbReference type="ChiTaRS" id="Tret1-1">
    <property type="organism name" value="fly"/>
</dbReference>
<dbReference type="Proteomes" id="UP000001292">
    <property type="component" value="Unassembled WGS sequence"/>
</dbReference>
<dbReference type="GO" id="GO:0005886">
    <property type="term" value="C:plasma membrane"/>
    <property type="evidence" value="ECO:0000250"/>
    <property type="project" value="UniProtKB"/>
</dbReference>
<dbReference type="GO" id="GO:0055056">
    <property type="term" value="F:D-glucose transmembrane transporter activity"/>
    <property type="evidence" value="ECO:0007669"/>
    <property type="project" value="EnsemblMetazoa"/>
</dbReference>
<dbReference type="GO" id="GO:0015574">
    <property type="term" value="F:trehalose transmembrane transporter activity"/>
    <property type="evidence" value="ECO:0000250"/>
    <property type="project" value="UniProtKB"/>
</dbReference>
<dbReference type="GO" id="GO:1904659">
    <property type="term" value="P:D-glucose transmembrane transport"/>
    <property type="evidence" value="ECO:0007669"/>
    <property type="project" value="EnsemblMetazoa"/>
</dbReference>
<dbReference type="GO" id="GO:0015771">
    <property type="term" value="P:trehalose transport"/>
    <property type="evidence" value="ECO:0000250"/>
    <property type="project" value="UniProtKB"/>
</dbReference>
<dbReference type="CDD" id="cd17358">
    <property type="entry name" value="MFS_GLUT6_8_Class3_like"/>
    <property type="match status" value="1"/>
</dbReference>
<dbReference type="FunFam" id="1.20.1250.20:FF:000055">
    <property type="entry name" value="Facilitated trehalose transporter Tret1-2 homolog"/>
    <property type="match status" value="1"/>
</dbReference>
<dbReference type="Gene3D" id="1.20.1250.20">
    <property type="entry name" value="MFS general substrate transporter like domains"/>
    <property type="match status" value="1"/>
</dbReference>
<dbReference type="InterPro" id="IPR020846">
    <property type="entry name" value="MFS_dom"/>
</dbReference>
<dbReference type="InterPro" id="IPR044775">
    <property type="entry name" value="MFS_ERD6/Tret1-like"/>
</dbReference>
<dbReference type="InterPro" id="IPR005828">
    <property type="entry name" value="MFS_sugar_transport-like"/>
</dbReference>
<dbReference type="InterPro" id="IPR036259">
    <property type="entry name" value="MFS_trans_sf"/>
</dbReference>
<dbReference type="InterPro" id="IPR050549">
    <property type="entry name" value="MFS_Trehalose_Transporter"/>
</dbReference>
<dbReference type="InterPro" id="IPR003663">
    <property type="entry name" value="Sugar/inositol_transpt"/>
</dbReference>
<dbReference type="InterPro" id="IPR005829">
    <property type="entry name" value="Sugar_transporter_CS"/>
</dbReference>
<dbReference type="NCBIfam" id="TIGR00879">
    <property type="entry name" value="SP"/>
    <property type="match status" value="1"/>
</dbReference>
<dbReference type="PANTHER" id="PTHR48021">
    <property type="match status" value="1"/>
</dbReference>
<dbReference type="PANTHER" id="PTHR48021:SF96">
    <property type="entry name" value="FACILITATED TREHALOSE TRANSPORTER TRET1-1-RELATED"/>
    <property type="match status" value="1"/>
</dbReference>
<dbReference type="Pfam" id="PF00083">
    <property type="entry name" value="Sugar_tr"/>
    <property type="match status" value="1"/>
</dbReference>
<dbReference type="PRINTS" id="PR00171">
    <property type="entry name" value="SUGRTRNSPORT"/>
</dbReference>
<dbReference type="SUPFAM" id="SSF103473">
    <property type="entry name" value="MFS general substrate transporter"/>
    <property type="match status" value="1"/>
</dbReference>
<dbReference type="PROSITE" id="PS50850">
    <property type="entry name" value="MFS"/>
    <property type="match status" value="1"/>
</dbReference>
<dbReference type="PROSITE" id="PS00216">
    <property type="entry name" value="SUGAR_TRANSPORT_1"/>
    <property type="match status" value="2"/>
</dbReference>
<dbReference type="PROSITE" id="PS00217">
    <property type="entry name" value="SUGAR_TRANSPORT_2"/>
    <property type="match status" value="1"/>
</dbReference>
<gene>
    <name evidence="1" type="primary">Tret1-1</name>
    <name type="ORF">GM21298</name>
</gene>